<dbReference type="EMBL" id="J02459">
    <property type="protein sequence ID" value="AAA96595.1"/>
    <property type="molecule type" value="Genomic_DNA"/>
</dbReference>
<dbReference type="EMBL" id="M38285">
    <property type="protein sequence ID" value="AAA32253.1"/>
    <property type="molecule type" value="Genomic_DNA"/>
</dbReference>
<dbReference type="PIR" id="E94614">
    <property type="entry name" value="ZQBPL"/>
</dbReference>
<dbReference type="RefSeq" id="NP_040642.1">
    <property type="nucleotide sequence ID" value="NC_001416.1"/>
</dbReference>
<dbReference type="PDB" id="4MO1">
    <property type="method" value="X-ray"/>
    <property type="resolution" value="2.10 A"/>
    <property type="chains" value="A/B=38-207"/>
</dbReference>
<dbReference type="PDB" id="7UBJ">
    <property type="method" value="X-ray"/>
    <property type="resolution" value="1.46 A"/>
    <property type="chains" value="A/B=62-207"/>
</dbReference>
<dbReference type="PDB" id="7UBK">
    <property type="method" value="X-ray"/>
    <property type="resolution" value="1.97 A"/>
    <property type="chains" value="A/B=62-207"/>
</dbReference>
<dbReference type="PDB" id="7UBL">
    <property type="method" value="X-ray"/>
    <property type="resolution" value="2.18 A"/>
    <property type="chains" value="A=62-207"/>
</dbReference>
<dbReference type="PDB" id="7UBM">
    <property type="method" value="EM"/>
    <property type="resolution" value="3.13 A"/>
    <property type="chains" value="Q=1-207"/>
</dbReference>
<dbReference type="PDB" id="7UBN">
    <property type="method" value="EM"/>
    <property type="resolution" value="3.36 A"/>
    <property type="chains" value="Q=1-207"/>
</dbReference>
<dbReference type="PDBsum" id="4MO1"/>
<dbReference type="PDBsum" id="7UBJ"/>
<dbReference type="PDBsum" id="7UBK"/>
<dbReference type="PDBsum" id="7UBL"/>
<dbReference type="PDBsum" id="7UBM"/>
<dbReference type="PDBsum" id="7UBN"/>
<dbReference type="EMDB" id="EMD-26438"/>
<dbReference type="SMR" id="P03047"/>
<dbReference type="IntAct" id="P03047">
    <property type="interactions" value="9"/>
</dbReference>
<dbReference type="DNASU" id="2703477"/>
<dbReference type="GeneID" id="2703477"/>
<dbReference type="KEGG" id="vg:2703477"/>
<dbReference type="EvolutionaryTrace" id="P03047"/>
<dbReference type="Proteomes" id="UP000001711">
    <property type="component" value="Genome"/>
</dbReference>
<dbReference type="GO" id="GO:0003677">
    <property type="term" value="F:DNA binding"/>
    <property type="evidence" value="ECO:0007669"/>
    <property type="project" value="UniProtKB-UniRule"/>
</dbReference>
<dbReference type="GO" id="GO:0008270">
    <property type="term" value="F:zinc ion binding"/>
    <property type="evidence" value="ECO:0007669"/>
    <property type="project" value="UniProtKB-UniRule"/>
</dbReference>
<dbReference type="GO" id="GO:0006353">
    <property type="term" value="P:DNA-templated transcription termination"/>
    <property type="evidence" value="ECO:0007669"/>
    <property type="project" value="UniProtKB-UniRule"/>
</dbReference>
<dbReference type="GO" id="GO:0031564">
    <property type="term" value="P:transcription antitermination"/>
    <property type="evidence" value="ECO:0000314"/>
    <property type="project" value="UniProtKB"/>
</dbReference>
<dbReference type="Gene3D" id="1.10.274.110">
    <property type="match status" value="1"/>
</dbReference>
<dbReference type="HAMAP" id="MF_04158">
    <property type="entry name" value="Antitermination_lambda"/>
    <property type="match status" value="1"/>
</dbReference>
<dbReference type="InterPro" id="IPR038500">
    <property type="entry name" value="Antitermination_sf"/>
</dbReference>
<dbReference type="InterPro" id="IPR003222">
    <property type="entry name" value="Antitermntn"/>
</dbReference>
<dbReference type="InterPro" id="IPR036410">
    <property type="entry name" value="HSP_DnaJ_Cys-rich_dom_sf"/>
</dbReference>
<dbReference type="Pfam" id="PF03589">
    <property type="entry name" value="Antiterm"/>
    <property type="match status" value="2"/>
</dbReference>
<dbReference type="SUPFAM" id="SSF57938">
    <property type="entry name" value="DnaJ/Hsp40 cysteine-rich domain"/>
    <property type="match status" value="1"/>
</dbReference>
<evidence type="ECO:0000255" key="1">
    <source>
        <dbReference type="HAMAP-Rule" id="MF_04158"/>
    </source>
</evidence>
<evidence type="ECO:0000256" key="2">
    <source>
        <dbReference type="SAM" id="MobiDB-lite"/>
    </source>
</evidence>
<evidence type="ECO:0000269" key="3">
    <source>
    </source>
</evidence>
<evidence type="ECO:0000269" key="4">
    <source>
    </source>
</evidence>
<evidence type="ECO:0000269" key="5">
    <source>
    </source>
</evidence>
<evidence type="ECO:0000269" key="6">
    <source>
    </source>
</evidence>
<evidence type="ECO:0000269" key="7">
    <source>
    </source>
</evidence>
<evidence type="ECO:0000269" key="8">
    <source>
    </source>
</evidence>
<evidence type="ECO:0000303" key="9">
    <source>
    </source>
</evidence>
<evidence type="ECO:0000305" key="10"/>
<evidence type="ECO:0000305" key="11">
    <source>
    </source>
</evidence>
<evidence type="ECO:0007744" key="12">
    <source>
        <dbReference type="PDB" id="4MO1"/>
    </source>
</evidence>
<evidence type="ECO:0007829" key="13">
    <source>
        <dbReference type="PDB" id="7UBJ"/>
    </source>
</evidence>
<evidence type="ECO:0007829" key="14">
    <source>
        <dbReference type="PDB" id="7UBK"/>
    </source>
</evidence>
<evidence type="ECO:0007829" key="15">
    <source>
        <dbReference type="PDB" id="7UBL"/>
    </source>
</evidence>
<evidence type="ECO:0007829" key="16">
    <source>
        <dbReference type="PDB" id="7UBM"/>
    </source>
</evidence>
<evidence type="ECO:0007829" key="17">
    <source>
        <dbReference type="PDB" id="7UBN"/>
    </source>
</evidence>
<organism>
    <name type="scientific">Escherichia phage lambda</name>
    <name type="common">Bacteriophage lambda</name>
    <dbReference type="NCBI Taxonomy" id="2681611"/>
    <lineage>
        <taxon>Viruses</taxon>
        <taxon>Duplodnaviria</taxon>
        <taxon>Heunggongvirae</taxon>
        <taxon>Uroviricota</taxon>
        <taxon>Caudoviricetes</taxon>
        <taxon>Lambdavirus</taxon>
        <taxon>Lambdavirus lambda</taxon>
    </lineage>
</organism>
<keyword id="KW-0002">3D-structure</keyword>
<keyword id="KW-0238">DNA-binding</keyword>
<keyword id="KW-0945">Host-virus interaction</keyword>
<keyword id="KW-0479">Metal-binding</keyword>
<keyword id="KW-1185">Reference proteome</keyword>
<keyword id="KW-0804">Transcription</keyword>
<keyword id="KW-0805">Transcription regulation</keyword>
<keyword id="KW-0806">Transcription termination</keyword>
<keyword id="KW-0862">Zinc</keyword>
<keyword id="KW-0863">Zinc-finger</keyword>
<name>REGQ_LAMBD</name>
<comment type="function">
    <text evidence="1 4 6 7 9">Mediates the switch from middle to viral late gene expression by associating with host RNA polymerase (RNAP) so that the latter can read without pausing and through transcription terminators preceding late genes (PubMed:10384296, PubMed:18832144, PubMed:31455742). Competes with host factor sigma 70 for binding to RPOB, the beta-subunit of host RNAP (PubMed:18832144). To join the elongation complex, binds a specific DNA Q-binding element (QBE) and interacts with RNAP that is paused during early elongation (PubMed:10384296). Participates in the lysis-lysogeny decision by activating the expression of the late lytic genes (PubMed:25092034).</text>
</comment>
<comment type="subunit">
    <text evidence="1 4 5 8">Interacts with host RPOB (via flap domain); this interaction renders host RNAP resistant to transcription pausing and allows it to read through termination signals (PubMed:18832144). Interacts with host RNA polymerase sigma factor RPOD (via domain-4) (PubMed:24440517). Interacts with host NUSA (via N-terminus and AR2 domain); this interaction releases the autoinhibition of NUSA (PubMed:32313022).</text>
</comment>
<comment type="similarity">
    <text evidence="1">Belongs to the phage antitermination Q type 2 family.</text>
</comment>
<reference key="1">
    <citation type="journal article" date="1982" name="J. Mol. Biol.">
        <title>Nucleotide sequence of bacteriophage lambda DNA.</title>
        <authorList>
            <person name="Sanger F."/>
            <person name="Coulson A.R."/>
            <person name="Hong G.F."/>
            <person name="Hill D.F."/>
            <person name="Petersen G.B."/>
        </authorList>
    </citation>
    <scope>NUCLEOTIDE SEQUENCE [LARGE SCALE GENOMIC DNA]</scope>
</reference>
<reference key="2">
    <citation type="journal article" date="1981" name="FEBS Lett.">
        <title>Complete nucleotide sequence of the bacteriophage lambda DNA region containing gene Q and promoter pR'.</title>
        <authorList>
            <person name="Petrov N.A."/>
            <person name="Karginov V.A."/>
            <person name="Mikriukov N.N."/>
            <person name="Serpinski O.I."/>
            <person name="Kravchenko V.V."/>
        </authorList>
    </citation>
    <scope>NUCLEOTIDE SEQUENCE [GENOMIC DNA]</scope>
</reference>
<reference key="3">
    <citation type="journal article" date="1982" name="Bioorg. Khim.">
        <title>Nucleotide sequence of the bacteriophage lambda DNA region containing gene Q.</title>
        <authorList>
            <person name="Petrov N.A."/>
            <person name="Serpinski O.I."/>
            <person name="Mikryukov N.N."/>
            <person name="Karginov V.A."/>
            <person name="Kravchenko V.V."/>
        </authorList>
    </citation>
    <scope>NUCLEOTIDE SEQUENCE [GENOMIC DNA]</scope>
</reference>
<reference key="4">
    <citation type="journal article" date="1998" name="Cold Spring Harb. Symp. Quant. Biol.">
        <title>Antitermination by bacteriophage lambda Q protein.</title>
        <authorList>
            <person name="Roberts J.W."/>
            <person name="Yarnell W."/>
            <person name="Bartlett E."/>
            <person name="Guo J."/>
            <person name="Marr M."/>
            <person name="Ko D.C."/>
            <person name="Sun H."/>
            <person name="Roberts C.W."/>
        </authorList>
    </citation>
    <scope>REVIEW</scope>
</reference>
<reference key="5">
    <citation type="journal article" date="2004" name="J. Bacteriol.">
        <title>DNA binding regions of Q proteins of phages lambda and phi80.</title>
        <authorList>
            <person name="Guo J."/>
            <person name="Roberts J.W."/>
        </authorList>
    </citation>
    <scope>MUTAGENESIS OF GLU-134; VAL-189 AND HIS-192</scope>
    <scope>DNA-BINDING</scope>
</reference>
<reference key="6">
    <citation type="journal article" date="2008" name="Proc. Natl. Acad. Sci. U.S.A.">
        <title>The bacteriophage lambda Q antiterminator protein contacts the beta-flap domain of RNA polymerase.</title>
        <authorList>
            <person name="Deighan P."/>
            <person name="Diez C.M."/>
            <person name="Leibman M."/>
            <person name="Hochschild A."/>
            <person name="Nickels B.E."/>
        </authorList>
    </citation>
    <scope>FUNCTION</scope>
    <scope>INTERACTION WITH HOST RPOB</scope>
</reference>
<reference key="7">
    <citation type="journal article" date="2014" name="J. Bacteriol.">
        <title>Commitment to lysogeny is preceded by a prolonged period of sensitivity to the late lytic regulator Q in bacteriophage lambda.</title>
        <authorList>
            <person name="Svenningsen S.L."/>
            <person name="Semsey S."/>
        </authorList>
    </citation>
    <scope>FUNCTION</scope>
</reference>
<reference key="8">
    <citation type="journal article" date="2019" name="Proc. Natl. Acad. Sci. U.S.A.">
        <title>Structural basis of Q-dependent antitermination.</title>
        <authorList>
            <person name="Yin Z."/>
            <person name="Kaelber J.T."/>
            <person name="Ebright R.H."/>
        </authorList>
    </citation>
    <scope>FUNCTION</scope>
</reference>
<reference key="9">
    <citation type="journal article" date="2020" name="Sci. Rep.">
        <title>NusA directly interacts with antitermination factor Q from phage lambda.</title>
        <authorList>
            <person name="Dudenhoeffer B.R."/>
            <person name="Borggraefe J."/>
            <person name="Schweimer K."/>
            <person name="Knauer S.H."/>
        </authorList>
    </citation>
    <scope>INTERACTION WITH HOST NUSA</scope>
</reference>
<reference evidence="12" key="10">
    <citation type="journal article" date="2014" name="Structure">
        <title>Structure of the DNA-binding and RNA-polymerase-binding region of transcription antitermination factor lambdaQ.</title>
        <authorList>
            <person name="Vorobiev S.M."/>
            <person name="Gensler Y."/>
            <person name="Vahedian-Movahed H."/>
            <person name="Seetharaman J."/>
            <person name="Su M."/>
            <person name="Huang J.Y."/>
            <person name="Xiao R."/>
            <person name="Kornhaber G."/>
            <person name="Montelione G.T."/>
            <person name="Tong L."/>
            <person name="Ebright R.H."/>
            <person name="Nickels B.E."/>
        </authorList>
    </citation>
    <scope>X-RAY CRYSTALLOGRAPHY (2.10 ANGSTROMS) OF 38-207 IN COMPLEX WITH ZINC</scope>
    <scope>INTERACTION WITH HOST RPOB</scope>
    <scope>INTERACTION WITH HOST RNA POLYMERASE SIGMA FACTOR RPOD</scope>
    <scope>DNA-BINDING</scope>
    <scope>MUTAGENESIS OF GLU-134</scope>
</reference>
<sequence length="207" mass="22473">MRLESVAKFHSPKSPMMSDSPRATASDSLSGTDVMAAMGMAQSQAGFGMAAFCGKHELSQNDKQKAINYLMQFAHKVSGKYRGVAKLEGNTKAKVLQVLATFAYADYCRSAATPGARCRDCHGTGRAVDIAKTELWGRVVEKECGRCKGVGYSRMPASAAYRAVTMLIPNLTQPTWSRTVKPLYDALVVQCHKEESIADNILNAVTR</sequence>
<organismHost>
    <name type="scientific">Escherichia coli</name>
    <dbReference type="NCBI Taxonomy" id="562"/>
</organismHost>
<gene>
    <name evidence="1" type="primary">Q</name>
</gene>
<accession>P03047</accession>
<accession>Q38271</accession>
<feature type="chain" id="PRO_0000073895" description="Antitermination protein Q">
    <location>
        <begin position="1"/>
        <end position="207"/>
    </location>
</feature>
<feature type="zinc finger region" evidence="1 11">
    <location>
        <begin position="118"/>
        <end position="147"/>
    </location>
</feature>
<feature type="DNA-binding region" evidence="1 3 5">
    <location>
        <begin position="171"/>
        <end position="192"/>
    </location>
</feature>
<feature type="region of interest" description="Disordered" evidence="2">
    <location>
        <begin position="1"/>
        <end position="28"/>
    </location>
</feature>
<feature type="binding site" evidence="1 5">
    <location>
        <position position="118"/>
    </location>
    <ligand>
        <name>Zn(2+)</name>
        <dbReference type="ChEBI" id="CHEBI:29105"/>
    </ligand>
</feature>
<feature type="binding site" evidence="1 5">
    <location>
        <position position="121"/>
    </location>
    <ligand>
        <name>Zn(2+)</name>
        <dbReference type="ChEBI" id="CHEBI:29105"/>
    </ligand>
</feature>
<feature type="binding site" evidence="1 5">
    <location>
        <position position="144"/>
    </location>
    <ligand>
        <name>Zn(2+)</name>
        <dbReference type="ChEBI" id="CHEBI:29105"/>
    </ligand>
</feature>
<feature type="binding site" evidence="1 5">
    <location>
        <position position="147"/>
    </location>
    <ligand>
        <name>Zn(2+)</name>
        <dbReference type="ChEBI" id="CHEBI:29105"/>
    </ligand>
</feature>
<feature type="site" description="Interaction with host rpoB" evidence="1 5">
    <location>
        <position position="101"/>
    </location>
</feature>
<feature type="site" description="Interaction with host RNA polymerase sigma factor RPOD" evidence="1 5">
    <location>
        <position position="134"/>
    </location>
</feature>
<feature type="site" description="Interaction with host rpoB" evidence="1 5">
    <location>
        <position position="160"/>
    </location>
</feature>
<feature type="site" description="Interaction with host rpoB" evidence="1 5">
    <location>
        <position position="165"/>
    </location>
</feature>
<feature type="mutagenesis site" description="Increased binding to QBE and increased suppressor activity." evidence="3 5">
    <original>E</original>
    <variation>K</variation>
    <location>
        <position position="134"/>
    </location>
</feature>
<feature type="mutagenesis site" description="Increased suppressor activity." evidence="3">
    <original>V</original>
    <variation>E</variation>
    <location>
        <position position="189"/>
    </location>
</feature>
<feature type="mutagenesis site" description="Increased suppressor activity." evidence="3">
    <original>H</original>
    <variation>Y</variation>
    <location>
        <position position="192"/>
    </location>
</feature>
<feature type="sequence conflict" description="In Ref. 2; AAA32253." evidence="10" ref="2">
    <original>FA</original>
    <variation>LP</variation>
    <location>
        <begin position="102"/>
        <end position="103"/>
    </location>
</feature>
<feature type="sequence conflict" description="In Ref. 2; AAA32253." evidence="10" ref="2">
    <original>A</original>
    <variation>G</variation>
    <location>
        <position position="111"/>
    </location>
</feature>
<feature type="sequence conflict" description="In Ref. 2 and 3." evidence="10" ref="2 3">
    <original>V</original>
    <variation>I</variation>
    <location>
        <position position="205"/>
    </location>
</feature>
<feature type="helix" evidence="17">
    <location>
        <begin position="4"/>
        <end position="9"/>
    </location>
</feature>
<feature type="strand" evidence="17">
    <location>
        <begin position="18"/>
        <end position="20"/>
    </location>
</feature>
<feature type="helix" evidence="17">
    <location>
        <begin position="33"/>
        <end position="40"/>
    </location>
</feature>
<feature type="strand" evidence="17">
    <location>
        <begin position="43"/>
        <end position="45"/>
    </location>
</feature>
<feature type="helix" evidence="16">
    <location>
        <begin position="46"/>
        <end position="55"/>
    </location>
</feature>
<feature type="helix" evidence="13">
    <location>
        <begin position="62"/>
        <end position="77"/>
    </location>
</feature>
<feature type="helix" evidence="13">
    <location>
        <begin position="78"/>
        <end position="80"/>
    </location>
</feature>
<feature type="helix" evidence="13">
    <location>
        <begin position="82"/>
        <end position="85"/>
    </location>
</feature>
<feature type="helix" evidence="13">
    <location>
        <begin position="89"/>
        <end position="112"/>
    </location>
</feature>
<feature type="turn" evidence="15">
    <location>
        <begin position="114"/>
        <end position="116"/>
    </location>
</feature>
<feature type="turn" evidence="13">
    <location>
        <begin position="119"/>
        <end position="123"/>
    </location>
</feature>
<feature type="strand" evidence="13">
    <location>
        <begin position="124"/>
        <end position="128"/>
    </location>
</feature>
<feature type="helix" evidence="13">
    <location>
        <begin position="130"/>
        <end position="136"/>
    </location>
</feature>
<feature type="strand" evidence="13">
    <location>
        <begin position="141"/>
        <end position="143"/>
    </location>
</feature>
<feature type="turn" evidence="13">
    <location>
        <begin position="145"/>
        <end position="149"/>
    </location>
</feature>
<feature type="strand" evidence="14">
    <location>
        <begin position="150"/>
        <end position="152"/>
    </location>
</feature>
<feature type="helix" evidence="13">
    <location>
        <begin position="157"/>
        <end position="165"/>
    </location>
</feature>
<feature type="helix" evidence="13">
    <location>
        <begin position="173"/>
        <end position="179"/>
    </location>
</feature>
<feature type="helix" evidence="13">
    <location>
        <begin position="181"/>
        <end position="202"/>
    </location>
</feature>
<proteinExistence type="evidence at protein level"/>
<protein>
    <recommendedName>
        <fullName evidence="1">Antitermination protein Q</fullName>
    </recommendedName>
</protein>